<keyword id="KW-0687">Ribonucleoprotein</keyword>
<keyword id="KW-0689">Ribosomal protein</keyword>
<keyword id="KW-0694">RNA-binding</keyword>
<keyword id="KW-0699">rRNA-binding</keyword>
<proteinExistence type="inferred from homology"/>
<accession>P10132</accession>
<accession>Q2SRF7</accession>
<dbReference type="EMBL" id="X06414">
    <property type="protein sequence ID" value="CAA29708.1"/>
    <property type="molecule type" value="Genomic_DNA"/>
</dbReference>
<dbReference type="EMBL" id="CP000123">
    <property type="protein sequence ID" value="ABC01777.1"/>
    <property type="molecule type" value="Genomic_DNA"/>
</dbReference>
<dbReference type="PIR" id="S02835">
    <property type="entry name" value="R3YM19"/>
</dbReference>
<dbReference type="RefSeq" id="WP_011387541.1">
    <property type="nucleotide sequence ID" value="NC_007633.1"/>
</dbReference>
<dbReference type="SMR" id="P10132"/>
<dbReference type="GeneID" id="23778354"/>
<dbReference type="KEGG" id="mcp:MCAP_0692"/>
<dbReference type="HOGENOM" id="CLU_144911_0_1_14"/>
<dbReference type="PhylomeDB" id="P10132"/>
<dbReference type="Proteomes" id="UP000001928">
    <property type="component" value="Chromosome"/>
</dbReference>
<dbReference type="GO" id="GO:0005737">
    <property type="term" value="C:cytoplasm"/>
    <property type="evidence" value="ECO:0007669"/>
    <property type="project" value="UniProtKB-ARBA"/>
</dbReference>
<dbReference type="GO" id="GO:0015935">
    <property type="term" value="C:small ribosomal subunit"/>
    <property type="evidence" value="ECO:0007669"/>
    <property type="project" value="InterPro"/>
</dbReference>
<dbReference type="GO" id="GO:0019843">
    <property type="term" value="F:rRNA binding"/>
    <property type="evidence" value="ECO:0007669"/>
    <property type="project" value="UniProtKB-UniRule"/>
</dbReference>
<dbReference type="GO" id="GO:0003735">
    <property type="term" value="F:structural constituent of ribosome"/>
    <property type="evidence" value="ECO:0007669"/>
    <property type="project" value="InterPro"/>
</dbReference>
<dbReference type="GO" id="GO:0000028">
    <property type="term" value="P:ribosomal small subunit assembly"/>
    <property type="evidence" value="ECO:0007669"/>
    <property type="project" value="TreeGrafter"/>
</dbReference>
<dbReference type="GO" id="GO:0006412">
    <property type="term" value="P:translation"/>
    <property type="evidence" value="ECO:0007669"/>
    <property type="project" value="UniProtKB-UniRule"/>
</dbReference>
<dbReference type="FunFam" id="3.30.860.10:FF:000001">
    <property type="entry name" value="30S ribosomal protein S19"/>
    <property type="match status" value="1"/>
</dbReference>
<dbReference type="Gene3D" id="3.30.860.10">
    <property type="entry name" value="30s Ribosomal Protein S19, Chain A"/>
    <property type="match status" value="1"/>
</dbReference>
<dbReference type="HAMAP" id="MF_00531">
    <property type="entry name" value="Ribosomal_uS19"/>
    <property type="match status" value="1"/>
</dbReference>
<dbReference type="InterPro" id="IPR002222">
    <property type="entry name" value="Ribosomal_uS19"/>
</dbReference>
<dbReference type="InterPro" id="IPR005732">
    <property type="entry name" value="Ribosomal_uS19_bac-type"/>
</dbReference>
<dbReference type="InterPro" id="IPR020934">
    <property type="entry name" value="Ribosomal_uS19_CS"/>
</dbReference>
<dbReference type="InterPro" id="IPR023575">
    <property type="entry name" value="Ribosomal_uS19_SF"/>
</dbReference>
<dbReference type="NCBIfam" id="TIGR01050">
    <property type="entry name" value="rpsS_bact"/>
    <property type="match status" value="1"/>
</dbReference>
<dbReference type="PANTHER" id="PTHR11880">
    <property type="entry name" value="RIBOSOMAL PROTEIN S19P FAMILY MEMBER"/>
    <property type="match status" value="1"/>
</dbReference>
<dbReference type="PANTHER" id="PTHR11880:SF8">
    <property type="entry name" value="SMALL RIBOSOMAL SUBUNIT PROTEIN US19M"/>
    <property type="match status" value="1"/>
</dbReference>
<dbReference type="Pfam" id="PF00203">
    <property type="entry name" value="Ribosomal_S19"/>
    <property type="match status" value="1"/>
</dbReference>
<dbReference type="PIRSF" id="PIRSF002144">
    <property type="entry name" value="Ribosomal_S19"/>
    <property type="match status" value="1"/>
</dbReference>
<dbReference type="PRINTS" id="PR00975">
    <property type="entry name" value="RIBOSOMALS19"/>
</dbReference>
<dbReference type="SUPFAM" id="SSF54570">
    <property type="entry name" value="Ribosomal protein S19"/>
    <property type="match status" value="1"/>
</dbReference>
<dbReference type="PROSITE" id="PS00323">
    <property type="entry name" value="RIBOSOMAL_S19"/>
    <property type="match status" value="1"/>
</dbReference>
<name>RS19_MYCCT</name>
<comment type="function">
    <text evidence="1">Protein S19 forms a complex with S13 that binds strongly to the 16S ribosomal RNA.</text>
</comment>
<comment type="similarity">
    <text evidence="2">Belongs to the universal ribosomal protein uS19 family.</text>
</comment>
<gene>
    <name type="primary">rpsS</name>
    <name type="ordered locus">MCAP_0692</name>
</gene>
<reference key="1">
    <citation type="journal article" date="1987" name="Mol. Gen. Genet.">
        <title>The ribosomal protein gene cluster of Mycoplasma capricolum.</title>
        <authorList>
            <person name="Ohkubo S."/>
            <person name="Muto A."/>
            <person name="Kawauchi Y."/>
            <person name="Yamao F."/>
            <person name="Osawa S."/>
        </authorList>
    </citation>
    <scope>NUCLEOTIDE SEQUENCE [GENOMIC DNA]</scope>
</reference>
<reference key="2">
    <citation type="submission" date="2005-09" db="EMBL/GenBank/DDBJ databases">
        <authorList>
            <person name="Glass J.I."/>
            <person name="Lartigue C."/>
            <person name="Pfannkoch C."/>
            <person name="Baden-Tillson H."/>
            <person name="Smith H.O."/>
            <person name="Venter J.C."/>
            <person name="Roske K."/>
            <person name="Wise K.S."/>
            <person name="Calcutt M.J."/>
            <person name="Nelson W.C."/>
            <person name="Nierman W.C."/>
        </authorList>
    </citation>
    <scope>NUCLEOTIDE SEQUENCE [LARGE SCALE GENOMIC DNA]</scope>
    <source>
        <strain>California kid / ATCC 27343 / NCTC 10154</strain>
    </source>
</reference>
<sequence>MARSLKKGPFVDENLFKKVTSAKDGEVIKTWSRRSTIFPEFIGKTFGVYNGKEFIPVYITEDMVGNKLGEFAPTRKFGGHGDDKGKKK</sequence>
<feature type="chain" id="PRO_0000129858" description="Small ribosomal subunit protein uS19">
    <location>
        <begin position="1"/>
        <end position="88"/>
    </location>
</feature>
<protein>
    <recommendedName>
        <fullName evidence="2">Small ribosomal subunit protein uS19</fullName>
    </recommendedName>
    <alternativeName>
        <fullName>30S ribosomal protein S19</fullName>
    </alternativeName>
</protein>
<organism>
    <name type="scientific">Mycoplasma capricolum subsp. capricolum (strain California kid / ATCC 27343 / NCTC 10154)</name>
    <dbReference type="NCBI Taxonomy" id="340047"/>
    <lineage>
        <taxon>Bacteria</taxon>
        <taxon>Bacillati</taxon>
        <taxon>Mycoplasmatota</taxon>
        <taxon>Mollicutes</taxon>
        <taxon>Mycoplasmataceae</taxon>
        <taxon>Mycoplasma</taxon>
    </lineage>
</organism>
<evidence type="ECO:0000250" key="1"/>
<evidence type="ECO:0000305" key="2"/>